<keyword id="KW-0028">Amino-acid biosynthesis</keyword>
<keyword id="KW-0479">Metal-binding</keyword>
<keyword id="KW-0486">Methionine biosynthesis</keyword>
<keyword id="KW-0489">Methyltransferase</keyword>
<keyword id="KW-0677">Repeat</keyword>
<keyword id="KW-0808">Transferase</keyword>
<keyword id="KW-0862">Zinc</keyword>
<proteinExistence type="inferred from homology"/>
<dbReference type="EC" id="2.1.1.14" evidence="1"/>
<dbReference type="EMBL" id="CP000266">
    <property type="protein sequence ID" value="ABF05694.1"/>
    <property type="molecule type" value="Genomic_DNA"/>
</dbReference>
<dbReference type="RefSeq" id="WP_000153986.1">
    <property type="nucleotide sequence ID" value="NC_008258.1"/>
</dbReference>
<dbReference type="SMR" id="Q0SZ21"/>
<dbReference type="KEGG" id="sfv:SFV_3669"/>
<dbReference type="HOGENOM" id="CLU_013175_0_0_6"/>
<dbReference type="UniPathway" id="UPA00051">
    <property type="reaction ID" value="UER00082"/>
</dbReference>
<dbReference type="Proteomes" id="UP000000659">
    <property type="component" value="Chromosome"/>
</dbReference>
<dbReference type="GO" id="GO:0003871">
    <property type="term" value="F:5-methyltetrahydropteroyltriglutamate-homocysteine S-methyltransferase activity"/>
    <property type="evidence" value="ECO:0007669"/>
    <property type="project" value="UniProtKB-UniRule"/>
</dbReference>
<dbReference type="GO" id="GO:0008270">
    <property type="term" value="F:zinc ion binding"/>
    <property type="evidence" value="ECO:0007669"/>
    <property type="project" value="InterPro"/>
</dbReference>
<dbReference type="GO" id="GO:0009086">
    <property type="term" value="P:methionine biosynthetic process"/>
    <property type="evidence" value="ECO:0007669"/>
    <property type="project" value="UniProtKB-UniRule"/>
</dbReference>
<dbReference type="GO" id="GO:0032259">
    <property type="term" value="P:methylation"/>
    <property type="evidence" value="ECO:0007669"/>
    <property type="project" value="UniProtKB-KW"/>
</dbReference>
<dbReference type="CDD" id="cd03311">
    <property type="entry name" value="CIMS_C_terminal_like"/>
    <property type="match status" value="1"/>
</dbReference>
<dbReference type="CDD" id="cd03312">
    <property type="entry name" value="CIMS_N_terminal_like"/>
    <property type="match status" value="1"/>
</dbReference>
<dbReference type="FunFam" id="3.20.20.210:FF:000002">
    <property type="entry name" value="5-methyltetrahydropteroyltriglutamate--homocysteine methyltransferase"/>
    <property type="match status" value="1"/>
</dbReference>
<dbReference type="FunFam" id="3.20.20.210:FF:000003">
    <property type="entry name" value="5-methyltetrahydropteroyltriglutamate--homocysteine methyltransferase"/>
    <property type="match status" value="1"/>
</dbReference>
<dbReference type="Gene3D" id="3.20.20.210">
    <property type="match status" value="2"/>
</dbReference>
<dbReference type="HAMAP" id="MF_00172">
    <property type="entry name" value="Meth_synth"/>
    <property type="match status" value="1"/>
</dbReference>
<dbReference type="InterPro" id="IPR013215">
    <property type="entry name" value="Cbl-indep_Met_Synth_N"/>
</dbReference>
<dbReference type="InterPro" id="IPR006276">
    <property type="entry name" value="Cobalamin-indep_Met_synthase"/>
</dbReference>
<dbReference type="InterPro" id="IPR002629">
    <property type="entry name" value="Met_Synth_C/arc"/>
</dbReference>
<dbReference type="InterPro" id="IPR038071">
    <property type="entry name" value="UROD/MetE-like_sf"/>
</dbReference>
<dbReference type="NCBIfam" id="TIGR01371">
    <property type="entry name" value="met_syn_B12ind"/>
    <property type="match status" value="1"/>
</dbReference>
<dbReference type="NCBIfam" id="NF003556">
    <property type="entry name" value="PRK05222.1"/>
    <property type="match status" value="1"/>
</dbReference>
<dbReference type="PANTHER" id="PTHR30519">
    <property type="entry name" value="5-METHYLTETRAHYDROPTEROYLTRIGLUTAMATE--HOMOCYSTEINE METHYLTRANSFERASE"/>
    <property type="match status" value="1"/>
</dbReference>
<dbReference type="Pfam" id="PF08267">
    <property type="entry name" value="Meth_synt_1"/>
    <property type="match status" value="1"/>
</dbReference>
<dbReference type="Pfam" id="PF01717">
    <property type="entry name" value="Meth_synt_2"/>
    <property type="match status" value="1"/>
</dbReference>
<dbReference type="PIRSF" id="PIRSF000382">
    <property type="entry name" value="MeTrfase_B12_ind"/>
    <property type="match status" value="1"/>
</dbReference>
<dbReference type="SUPFAM" id="SSF51726">
    <property type="entry name" value="UROD/MetE-like"/>
    <property type="match status" value="2"/>
</dbReference>
<gene>
    <name evidence="1" type="primary">metE</name>
    <name type="ordered locus">SFV_3669</name>
</gene>
<accession>Q0SZ21</accession>
<reference key="1">
    <citation type="journal article" date="2006" name="BMC Genomics">
        <title>Complete genome sequence of Shigella flexneri 5b and comparison with Shigella flexneri 2a.</title>
        <authorList>
            <person name="Nie H."/>
            <person name="Yang F."/>
            <person name="Zhang X."/>
            <person name="Yang J."/>
            <person name="Chen L."/>
            <person name="Wang J."/>
            <person name="Xiong Z."/>
            <person name="Peng J."/>
            <person name="Sun L."/>
            <person name="Dong J."/>
            <person name="Xue Y."/>
            <person name="Xu X."/>
            <person name="Chen S."/>
            <person name="Yao Z."/>
            <person name="Shen Y."/>
            <person name="Jin Q."/>
        </authorList>
    </citation>
    <scope>NUCLEOTIDE SEQUENCE [LARGE SCALE GENOMIC DNA]</scope>
    <source>
        <strain>8401</strain>
    </source>
</reference>
<evidence type="ECO:0000255" key="1">
    <source>
        <dbReference type="HAMAP-Rule" id="MF_00172"/>
    </source>
</evidence>
<organism>
    <name type="scientific">Shigella flexneri serotype 5b (strain 8401)</name>
    <dbReference type="NCBI Taxonomy" id="373384"/>
    <lineage>
        <taxon>Bacteria</taxon>
        <taxon>Pseudomonadati</taxon>
        <taxon>Pseudomonadota</taxon>
        <taxon>Gammaproteobacteria</taxon>
        <taxon>Enterobacterales</taxon>
        <taxon>Enterobacteriaceae</taxon>
        <taxon>Shigella</taxon>
    </lineage>
</organism>
<sequence>MTILNHTLGFPRVGLRRELKKAQESYWAGNSTREELLTVGRELRARHWDQQKQAGIDLLPVGDFAWYDHVLTTSLLLGNVPPRHQNKDGSVDIDTLFRIGRGRAPTGEPAAAAEMTKWFNTNYHYMVPEFVKGQQFKLTWTQLLEEVDEALALSHNVKPVLLGPVTYLWLGKVKGEQFDRLSLLNDILPVYQQVLAELAKRGIEWVQIDEPALVLELPQAWLDAYKPAYDALQGQVKLLLTTYFEGVTPNLDTITALPVQGLHVDLVHGKDDVVELHKRLPSDWLLSAGLINGRNVWRADLTEKYAQIKDIVGKRDLWVASSCSLLHSPIDLSVETRLDAEVKSWFAFALQKCHELALLRDALNSGDTAALAEWSAPIQARRHSTRVHNPAVEKRLAAITAQDSQRANVYEVRAEAQRARFKLPAWPTTTIGSFPQTTEIRTLRLDFKKGNLDANNYRTGIAEHIKQAIVEQERLGLDVLVHGEAERNDMVEYFGEHLDGFVFTQNGWVQSYGSRCVKPPIVIGDISRPAPITVEWAKYAQSLTDKPVKGMLTGPVTILCWSFPREDVSRETIAKQIALALRDEVADLEAAGIGIIQIDEPALREGLPLRRSDWDAYLQWGVEAFRINAAVAKDDTQIHTHMCYCEFNDIMDSIAALDADVITIETSRSDMELLESFEEFDYPNEIGPGVYDIHSPNVPSVEWIEALLKKAAKRIPAERLWVNPDCGLKTRGWPETRAALANMVQAAQNLRRG</sequence>
<protein>
    <recommendedName>
        <fullName evidence="1">5-methyltetrahydropteroyltriglutamate--homocysteine methyltransferase</fullName>
        <ecNumber evidence="1">2.1.1.14</ecNumber>
    </recommendedName>
    <alternativeName>
        <fullName evidence="1">Cobalamin-independent methionine synthase</fullName>
    </alternativeName>
    <alternativeName>
        <fullName evidence="1">Methionine synthase, vitamin-B12 independent isozyme</fullName>
    </alternativeName>
</protein>
<name>METE_SHIF8</name>
<feature type="chain" id="PRO_1000017274" description="5-methyltetrahydropteroyltriglutamate--homocysteine methyltransferase">
    <location>
        <begin position="1"/>
        <end position="753"/>
    </location>
</feature>
<feature type="active site" description="Proton donor" evidence="1">
    <location>
        <position position="694"/>
    </location>
</feature>
<feature type="binding site" evidence="1">
    <location>
        <begin position="17"/>
        <end position="20"/>
    </location>
    <ligand>
        <name>5-methyltetrahydropteroyltri-L-glutamate</name>
        <dbReference type="ChEBI" id="CHEBI:58207"/>
    </ligand>
</feature>
<feature type="binding site" evidence="1">
    <location>
        <position position="117"/>
    </location>
    <ligand>
        <name>5-methyltetrahydropteroyltri-L-glutamate</name>
        <dbReference type="ChEBI" id="CHEBI:58207"/>
    </ligand>
</feature>
<feature type="binding site" evidence="1">
    <location>
        <begin position="431"/>
        <end position="433"/>
    </location>
    <ligand>
        <name>L-homocysteine</name>
        <dbReference type="ChEBI" id="CHEBI:58199"/>
    </ligand>
</feature>
<feature type="binding site" evidence="1">
    <location>
        <begin position="431"/>
        <end position="433"/>
    </location>
    <ligand>
        <name>L-methionine</name>
        <dbReference type="ChEBI" id="CHEBI:57844"/>
    </ligand>
</feature>
<feature type="binding site" evidence="1">
    <location>
        <position position="484"/>
    </location>
    <ligand>
        <name>L-homocysteine</name>
        <dbReference type="ChEBI" id="CHEBI:58199"/>
    </ligand>
</feature>
<feature type="binding site" evidence="1">
    <location>
        <position position="484"/>
    </location>
    <ligand>
        <name>L-methionine</name>
        <dbReference type="ChEBI" id="CHEBI:57844"/>
    </ligand>
</feature>
<feature type="binding site" evidence="1">
    <location>
        <begin position="515"/>
        <end position="516"/>
    </location>
    <ligand>
        <name>5-methyltetrahydropteroyltri-L-glutamate</name>
        <dbReference type="ChEBI" id="CHEBI:58207"/>
    </ligand>
</feature>
<feature type="binding site" evidence="1">
    <location>
        <position position="561"/>
    </location>
    <ligand>
        <name>5-methyltetrahydropteroyltri-L-glutamate</name>
        <dbReference type="ChEBI" id="CHEBI:58207"/>
    </ligand>
</feature>
<feature type="binding site" evidence="1">
    <location>
        <position position="599"/>
    </location>
    <ligand>
        <name>L-homocysteine</name>
        <dbReference type="ChEBI" id="CHEBI:58199"/>
    </ligand>
</feature>
<feature type="binding site" evidence="1">
    <location>
        <position position="599"/>
    </location>
    <ligand>
        <name>L-methionine</name>
        <dbReference type="ChEBI" id="CHEBI:57844"/>
    </ligand>
</feature>
<feature type="binding site" evidence="1">
    <location>
        <position position="605"/>
    </location>
    <ligand>
        <name>5-methyltetrahydropteroyltri-L-glutamate</name>
        <dbReference type="ChEBI" id="CHEBI:58207"/>
    </ligand>
</feature>
<feature type="binding site" evidence="1">
    <location>
        <position position="641"/>
    </location>
    <ligand>
        <name>Zn(2+)</name>
        <dbReference type="ChEBI" id="CHEBI:29105"/>
        <note>catalytic</note>
    </ligand>
</feature>
<feature type="binding site" evidence="1">
    <location>
        <position position="643"/>
    </location>
    <ligand>
        <name>Zn(2+)</name>
        <dbReference type="ChEBI" id="CHEBI:29105"/>
        <note>catalytic</note>
    </ligand>
</feature>
<feature type="binding site" evidence="1">
    <location>
        <position position="665"/>
    </location>
    <ligand>
        <name>Zn(2+)</name>
        <dbReference type="ChEBI" id="CHEBI:29105"/>
        <note>catalytic</note>
    </ligand>
</feature>
<feature type="binding site" evidence="1">
    <location>
        <position position="726"/>
    </location>
    <ligand>
        <name>Zn(2+)</name>
        <dbReference type="ChEBI" id="CHEBI:29105"/>
        <note>catalytic</note>
    </ligand>
</feature>
<comment type="function">
    <text evidence="1">Catalyzes the transfer of a methyl group from 5-methyltetrahydrofolate to homocysteine resulting in methionine formation.</text>
</comment>
<comment type="catalytic activity">
    <reaction evidence="1">
        <text>5-methyltetrahydropteroyltri-L-glutamate + L-homocysteine = tetrahydropteroyltri-L-glutamate + L-methionine</text>
        <dbReference type="Rhea" id="RHEA:21196"/>
        <dbReference type="ChEBI" id="CHEBI:57844"/>
        <dbReference type="ChEBI" id="CHEBI:58140"/>
        <dbReference type="ChEBI" id="CHEBI:58199"/>
        <dbReference type="ChEBI" id="CHEBI:58207"/>
        <dbReference type="EC" id="2.1.1.14"/>
    </reaction>
</comment>
<comment type="cofactor">
    <cofactor evidence="1">
        <name>Zn(2+)</name>
        <dbReference type="ChEBI" id="CHEBI:29105"/>
    </cofactor>
    <text evidence="1">Binds 1 zinc ion per subunit.</text>
</comment>
<comment type="pathway">
    <text evidence="1">Amino-acid biosynthesis; L-methionine biosynthesis via de novo pathway; L-methionine from L-homocysteine (MetE route): step 1/1.</text>
</comment>
<comment type="similarity">
    <text evidence="1">Belongs to the vitamin-B12 independent methionine synthase family.</text>
</comment>